<protein>
    <recommendedName>
        <fullName evidence="1">Ribosomal RNA small subunit methyltransferase F</fullName>
        <ecNumber evidence="1">2.1.1.178</ecNumber>
    </recommendedName>
    <alternativeName>
        <fullName evidence="1">16S rRNA m5C1407 methyltransferase</fullName>
    </alternativeName>
    <alternativeName>
        <fullName evidence="1">rRNA (cytosine-C(5)-)-methyltransferase RsmF</fullName>
    </alternativeName>
</protein>
<sequence>MVQLNQNFIDTITQELPAHLSMDEFIAACDRPLRRSIRVNTLKISSDDFKTLMQPKGWTFDPIPWCEDGFWISYDEEEQLGNALEHIQGLFYIQEASSMLPPTALFTPSAFTTSAKWQYVLDLASAPGSKTTQMAALMQNQGLLVANEYSASRVKVLHANVLRMGASHCALTHFDGRVFGEYLYESFDAVLIDAPCGGEGTVRKDADALKHWSLDDVLAISETQKALIESAFLALKPGGSLVYSTCTLNRLENQGVCEYLKQVYGDAVQFESLSDLFDGAERATTAEGFLHVWPQIYDSEGFFVAKLTKTASVPRLQPEPKLQKNFPFTTASAKQAQGIKDYFQQDLGISLPDELIMVRDDEFWLFPHEFNAFIGRMRFQRIGIKLADNSKHGFKVRHEAIIALAGKQLSPTAKTVDVSDVEAKEYLMGRDIPLATAGKAQGEVIVCYGGAPLGMAKHLGNKLKNNLPRDLVKDKVLLLPEQTKSL</sequence>
<dbReference type="EC" id="2.1.1.178" evidence="1"/>
<dbReference type="EMBL" id="CP000753">
    <property type="protein sequence ID" value="ABS08585.1"/>
    <property type="status" value="ALT_INIT"/>
    <property type="molecule type" value="Genomic_DNA"/>
</dbReference>
<dbReference type="RefSeq" id="WP_086014143.1">
    <property type="nucleotide sequence ID" value="NC_009665.1"/>
</dbReference>
<dbReference type="SMR" id="A6WP46"/>
<dbReference type="KEGG" id="sbm:Shew185_2448"/>
<dbReference type="HOGENOM" id="CLU_005316_6_2_6"/>
<dbReference type="GO" id="GO:0005737">
    <property type="term" value="C:cytoplasm"/>
    <property type="evidence" value="ECO:0007669"/>
    <property type="project" value="UniProtKB-SubCell"/>
</dbReference>
<dbReference type="GO" id="GO:0003723">
    <property type="term" value="F:RNA binding"/>
    <property type="evidence" value="ECO:0007669"/>
    <property type="project" value="UniProtKB-KW"/>
</dbReference>
<dbReference type="GO" id="GO:0009383">
    <property type="term" value="F:rRNA (cytosine-C5-)-methyltransferase activity"/>
    <property type="evidence" value="ECO:0007669"/>
    <property type="project" value="TreeGrafter"/>
</dbReference>
<dbReference type="GO" id="GO:0070475">
    <property type="term" value="P:rRNA base methylation"/>
    <property type="evidence" value="ECO:0007669"/>
    <property type="project" value="TreeGrafter"/>
</dbReference>
<dbReference type="CDD" id="cd02440">
    <property type="entry name" value="AdoMet_MTases"/>
    <property type="match status" value="1"/>
</dbReference>
<dbReference type="Gene3D" id="3.10.450.720">
    <property type="match status" value="1"/>
</dbReference>
<dbReference type="Gene3D" id="3.40.50.150">
    <property type="entry name" value="Vaccinia Virus protein VP39"/>
    <property type="match status" value="1"/>
</dbReference>
<dbReference type="HAMAP" id="MF_01579">
    <property type="entry name" value="16SrRNA_methyltr_F"/>
    <property type="match status" value="1"/>
</dbReference>
<dbReference type="InterPro" id="IPR031341">
    <property type="entry name" value="Methyltr_RsmF_N"/>
</dbReference>
<dbReference type="InterPro" id="IPR049560">
    <property type="entry name" value="MeTrfase_RsmB-F_NOP2_cat"/>
</dbReference>
<dbReference type="InterPro" id="IPR001678">
    <property type="entry name" value="MeTrfase_RsmB-F_NOP2_dom"/>
</dbReference>
<dbReference type="InterPro" id="IPR027391">
    <property type="entry name" value="Nol1_Nop2_Fmu_2"/>
</dbReference>
<dbReference type="InterPro" id="IPR011023">
    <property type="entry name" value="Nop2p"/>
</dbReference>
<dbReference type="InterPro" id="IPR023267">
    <property type="entry name" value="RCMT"/>
</dbReference>
<dbReference type="InterPro" id="IPR023545">
    <property type="entry name" value="rRNA_ssu_MeTfrase_F"/>
</dbReference>
<dbReference type="InterPro" id="IPR029063">
    <property type="entry name" value="SAM-dependent_MTases_sf"/>
</dbReference>
<dbReference type="InterPro" id="IPR048457">
    <property type="entry name" value="YebU_pre-PUA_dom"/>
</dbReference>
<dbReference type="NCBIfam" id="TIGR00446">
    <property type="entry name" value="nop2p"/>
    <property type="match status" value="1"/>
</dbReference>
<dbReference type="NCBIfam" id="NF008898">
    <property type="entry name" value="PRK11933.1"/>
    <property type="match status" value="1"/>
</dbReference>
<dbReference type="PANTHER" id="PTHR22807:SF30">
    <property type="entry name" value="28S RRNA (CYTOSINE(4447)-C(5))-METHYLTRANSFERASE-RELATED"/>
    <property type="match status" value="1"/>
</dbReference>
<dbReference type="PANTHER" id="PTHR22807">
    <property type="entry name" value="NOP2 YEAST -RELATED NOL1/NOP2/FMU SUN DOMAIN-CONTAINING"/>
    <property type="match status" value="1"/>
</dbReference>
<dbReference type="Pfam" id="PF01189">
    <property type="entry name" value="Methyltr_RsmB-F"/>
    <property type="match status" value="1"/>
</dbReference>
<dbReference type="Pfam" id="PF17125">
    <property type="entry name" value="Methyltr_RsmF_N"/>
    <property type="match status" value="1"/>
</dbReference>
<dbReference type="Pfam" id="PF13636">
    <property type="entry name" value="Methyltranf_PUA"/>
    <property type="match status" value="1"/>
</dbReference>
<dbReference type="Pfam" id="PF21150">
    <property type="entry name" value="YebU_pre-PUA_dom"/>
    <property type="match status" value="1"/>
</dbReference>
<dbReference type="PRINTS" id="PR02008">
    <property type="entry name" value="RCMTFAMILY"/>
</dbReference>
<dbReference type="SUPFAM" id="SSF53335">
    <property type="entry name" value="S-adenosyl-L-methionine-dependent methyltransferases"/>
    <property type="match status" value="1"/>
</dbReference>
<dbReference type="PROSITE" id="PS51686">
    <property type="entry name" value="SAM_MT_RSMB_NOP"/>
    <property type="match status" value="1"/>
</dbReference>
<comment type="function">
    <text evidence="1">Specifically methylates the cytosine at position 1407 (m5C1407) of 16S rRNA.</text>
</comment>
<comment type="catalytic activity">
    <reaction evidence="1">
        <text>cytidine(1407) in 16S rRNA + S-adenosyl-L-methionine = 5-methylcytidine(1407) in 16S rRNA + S-adenosyl-L-homocysteine + H(+)</text>
        <dbReference type="Rhea" id="RHEA:42756"/>
        <dbReference type="Rhea" id="RHEA-COMP:10223"/>
        <dbReference type="Rhea" id="RHEA-COMP:10224"/>
        <dbReference type="ChEBI" id="CHEBI:15378"/>
        <dbReference type="ChEBI" id="CHEBI:57856"/>
        <dbReference type="ChEBI" id="CHEBI:59789"/>
        <dbReference type="ChEBI" id="CHEBI:74483"/>
        <dbReference type="ChEBI" id="CHEBI:82748"/>
        <dbReference type="EC" id="2.1.1.178"/>
    </reaction>
</comment>
<comment type="subcellular location">
    <subcellularLocation>
        <location evidence="1">Cytoplasm</location>
    </subcellularLocation>
</comment>
<comment type="similarity">
    <text evidence="1">Belongs to the class I-like SAM-binding methyltransferase superfamily. RsmB/NOP family.</text>
</comment>
<comment type="sequence caution" evidence="2">
    <conflict type="erroneous initiation">
        <sequence resource="EMBL-CDS" id="ABS08585"/>
    </conflict>
</comment>
<proteinExistence type="inferred from homology"/>
<organism>
    <name type="scientific">Shewanella baltica (strain OS185)</name>
    <dbReference type="NCBI Taxonomy" id="402882"/>
    <lineage>
        <taxon>Bacteria</taxon>
        <taxon>Pseudomonadati</taxon>
        <taxon>Pseudomonadota</taxon>
        <taxon>Gammaproteobacteria</taxon>
        <taxon>Alteromonadales</taxon>
        <taxon>Shewanellaceae</taxon>
        <taxon>Shewanella</taxon>
    </lineage>
</organism>
<name>RSMF_SHEB8</name>
<keyword id="KW-0963">Cytoplasm</keyword>
<keyword id="KW-0489">Methyltransferase</keyword>
<keyword id="KW-0694">RNA-binding</keyword>
<keyword id="KW-0698">rRNA processing</keyword>
<keyword id="KW-0949">S-adenosyl-L-methionine</keyword>
<keyword id="KW-0808">Transferase</keyword>
<evidence type="ECO:0000255" key="1">
    <source>
        <dbReference type="HAMAP-Rule" id="MF_01579"/>
    </source>
</evidence>
<evidence type="ECO:0000305" key="2"/>
<gene>
    <name evidence="1" type="primary">rsmF</name>
    <name type="ordered locus">Shew185_2448</name>
</gene>
<feature type="chain" id="PRO_0000382585" description="Ribosomal RNA small subunit methyltransferase F">
    <location>
        <begin position="1"/>
        <end position="486"/>
    </location>
</feature>
<feature type="active site" description="Nucleophile" evidence="1">
    <location>
        <position position="246"/>
    </location>
</feature>
<feature type="binding site" evidence="1">
    <location>
        <begin position="124"/>
        <end position="130"/>
    </location>
    <ligand>
        <name>S-adenosyl-L-methionine</name>
        <dbReference type="ChEBI" id="CHEBI:59789"/>
    </ligand>
</feature>
<feature type="binding site" evidence="1">
    <location>
        <position position="148"/>
    </location>
    <ligand>
        <name>S-adenosyl-L-methionine</name>
        <dbReference type="ChEBI" id="CHEBI:59789"/>
    </ligand>
</feature>
<feature type="binding site" evidence="1">
    <location>
        <position position="175"/>
    </location>
    <ligand>
        <name>S-adenosyl-L-methionine</name>
        <dbReference type="ChEBI" id="CHEBI:59789"/>
    </ligand>
</feature>
<feature type="binding site" evidence="1">
    <location>
        <position position="193"/>
    </location>
    <ligand>
        <name>S-adenosyl-L-methionine</name>
        <dbReference type="ChEBI" id="CHEBI:59789"/>
    </ligand>
</feature>
<accession>A6WP46</accession>
<reference key="1">
    <citation type="submission" date="2007-07" db="EMBL/GenBank/DDBJ databases">
        <title>Complete sequence of chromosome of Shewanella baltica OS185.</title>
        <authorList>
            <consortium name="US DOE Joint Genome Institute"/>
            <person name="Copeland A."/>
            <person name="Lucas S."/>
            <person name="Lapidus A."/>
            <person name="Barry K."/>
            <person name="Glavina del Rio T."/>
            <person name="Dalin E."/>
            <person name="Tice H."/>
            <person name="Pitluck S."/>
            <person name="Sims D."/>
            <person name="Brettin T."/>
            <person name="Bruce D."/>
            <person name="Detter J.C."/>
            <person name="Han C."/>
            <person name="Schmutz J."/>
            <person name="Larimer F."/>
            <person name="Land M."/>
            <person name="Hauser L."/>
            <person name="Kyrpides N."/>
            <person name="Mikhailova N."/>
            <person name="Brettar I."/>
            <person name="Rodrigues J."/>
            <person name="Konstantinidis K."/>
            <person name="Tiedje J."/>
            <person name="Richardson P."/>
        </authorList>
    </citation>
    <scope>NUCLEOTIDE SEQUENCE [LARGE SCALE GENOMIC DNA]</scope>
    <source>
        <strain>OS185</strain>
    </source>
</reference>